<proteinExistence type="evidence at protein level"/>
<protein>
    <recommendedName>
        <fullName evidence="4">Large ribosomal subunit protein mL55</fullName>
    </recommendedName>
    <alternativeName>
        <fullName>39S ribosomal protein L55, mitochondrial</fullName>
        <shortName>L55mt</shortName>
        <shortName>MRP-L55</shortName>
    </alternativeName>
</protein>
<gene>
    <name type="primary">mRpL55</name>
    <name type="ORF">CG14283</name>
</gene>
<dbReference type="EMBL" id="AJ278709">
    <property type="protein sequence ID" value="CAB99479.1"/>
    <property type="molecule type" value="mRNA"/>
</dbReference>
<dbReference type="EMBL" id="AE014297">
    <property type="protein sequence ID" value="AAF55632.1"/>
    <property type="molecule type" value="Genomic_DNA"/>
</dbReference>
<dbReference type="EMBL" id="AY071686">
    <property type="protein sequence ID" value="AAL49308.1"/>
    <property type="molecule type" value="mRNA"/>
</dbReference>
<dbReference type="RefSeq" id="NP_650780.1">
    <property type="nucleotide sequence ID" value="NM_142523.4"/>
</dbReference>
<dbReference type="SMR" id="Q9VE04"/>
<dbReference type="BioGRID" id="67288">
    <property type="interactions" value="1"/>
</dbReference>
<dbReference type="FunCoup" id="Q9VE04">
    <property type="interactions" value="995"/>
</dbReference>
<dbReference type="IntAct" id="Q9VE04">
    <property type="interactions" value="12"/>
</dbReference>
<dbReference type="STRING" id="7227.FBpp0083168"/>
<dbReference type="PaxDb" id="7227-FBpp0083168"/>
<dbReference type="DNASU" id="42290"/>
<dbReference type="EnsemblMetazoa" id="FBtr0083754">
    <property type="protein sequence ID" value="FBpp0083168"/>
    <property type="gene ID" value="FBgn0038678"/>
</dbReference>
<dbReference type="GeneID" id="42290"/>
<dbReference type="KEGG" id="dme:Dmel_CG14283"/>
<dbReference type="AGR" id="FB:FBgn0038678"/>
<dbReference type="CTD" id="128308"/>
<dbReference type="FlyBase" id="FBgn0038678">
    <property type="gene designation" value="mRpL55"/>
</dbReference>
<dbReference type="VEuPathDB" id="VectorBase:FBgn0038678"/>
<dbReference type="eggNOG" id="KOG4616">
    <property type="taxonomic scope" value="Eukaryota"/>
</dbReference>
<dbReference type="GeneTree" id="ENSGT00940000169038"/>
<dbReference type="HOGENOM" id="CLU_139855_1_0_1"/>
<dbReference type="InParanoid" id="Q9VE04"/>
<dbReference type="OMA" id="HEPRQLI"/>
<dbReference type="OrthoDB" id="9986315at2759"/>
<dbReference type="PhylomeDB" id="Q9VE04"/>
<dbReference type="Reactome" id="R-DME-5389840">
    <property type="pathway name" value="Mitochondrial translation elongation"/>
</dbReference>
<dbReference type="Reactome" id="R-DME-5419276">
    <property type="pathway name" value="Mitochondrial translation termination"/>
</dbReference>
<dbReference type="BioGRID-ORCS" id="42290">
    <property type="hits" value="1 hit in 1 CRISPR screen"/>
</dbReference>
<dbReference type="GenomeRNAi" id="42290"/>
<dbReference type="PRO" id="PR:Q9VE04"/>
<dbReference type="Proteomes" id="UP000000803">
    <property type="component" value="Chromosome 3R"/>
</dbReference>
<dbReference type="Bgee" id="FBgn0038678">
    <property type="expression patterns" value="Expressed in lamina wide-field cell Lawf2 (Drosophila) in brain and 122 other cell types or tissues"/>
</dbReference>
<dbReference type="ExpressionAtlas" id="Q9VE04">
    <property type="expression patterns" value="baseline and differential"/>
</dbReference>
<dbReference type="GO" id="GO:0005762">
    <property type="term" value="C:mitochondrial large ribosomal subunit"/>
    <property type="evidence" value="ECO:0000250"/>
    <property type="project" value="UniProtKB"/>
</dbReference>
<dbReference type="GO" id="GO:0005739">
    <property type="term" value="C:mitochondrion"/>
    <property type="evidence" value="ECO:0000314"/>
    <property type="project" value="FlyBase"/>
</dbReference>
<dbReference type="GO" id="GO:0003735">
    <property type="term" value="F:structural constituent of ribosome"/>
    <property type="evidence" value="ECO:0000250"/>
    <property type="project" value="UniProtKB"/>
</dbReference>
<dbReference type="GO" id="GO:0032543">
    <property type="term" value="P:mitochondrial translation"/>
    <property type="evidence" value="ECO:0000304"/>
    <property type="project" value="FlyBase"/>
</dbReference>
<dbReference type="GO" id="GO:0006412">
    <property type="term" value="P:translation"/>
    <property type="evidence" value="ECO:0000250"/>
    <property type="project" value="UniProtKB"/>
</dbReference>
<dbReference type="Gene3D" id="6.20.130.20">
    <property type="entry name" value="Mitochondrial ribosomal protein L55"/>
    <property type="match status" value="1"/>
</dbReference>
<dbReference type="InterPro" id="IPR018615">
    <property type="entry name" value="Ribosomal_mL55"/>
</dbReference>
<dbReference type="InterPro" id="IPR044884">
    <property type="entry name" value="Ribosomal_mL55_sf"/>
</dbReference>
<dbReference type="PANTHER" id="PTHR34095">
    <property type="entry name" value="39S RIBOSOMAL PROTEIN L55, MITOCHONDRIAL"/>
    <property type="match status" value="1"/>
</dbReference>
<dbReference type="PANTHER" id="PTHR34095:SF1">
    <property type="entry name" value="LARGE RIBOSOMAL SUBUNIT PROTEIN ML55"/>
    <property type="match status" value="1"/>
</dbReference>
<dbReference type="Pfam" id="PF09776">
    <property type="entry name" value="Mitoc_L55"/>
    <property type="match status" value="1"/>
</dbReference>
<evidence type="ECO:0000250" key="1"/>
<evidence type="ECO:0000255" key="2"/>
<evidence type="ECO:0000269" key="3">
    <source>
    </source>
</evidence>
<evidence type="ECO:0000305" key="4"/>
<sequence length="107" mass="12568">MLLKQLPQAVQQIRCISSATTAVTRLHRSVYCRLYPTVVVQPDGSTINIRYHEPRKIIKLPLDLSTLTDAERRARLEARKPRKKVKIMEEVEDNFNAKKYMKYIKKK</sequence>
<reference key="1">
    <citation type="journal article" date="2005" name="Exp. Cell Res.">
        <title>The mitochondrial ribosome-specific MrpL55 protein is essential in Drosophila and dynamically required during development.</title>
        <authorList>
            <person name="Tselykh T.V."/>
            <person name="Roos C."/>
            <person name="Heino T.I."/>
        </authorList>
    </citation>
    <scope>NUCLEOTIDE SEQUENCE [MRNA]</scope>
    <scope>FUNCTION</scope>
    <scope>SUBCELLULAR LOCATION</scope>
    <scope>TISSUE SPECIFICITY</scope>
    <scope>DEVELOPMENTAL STAGE</scope>
    <scope>DISRUPTION PHENOTYPE</scope>
</reference>
<reference key="2">
    <citation type="journal article" date="2000" name="Science">
        <title>The genome sequence of Drosophila melanogaster.</title>
        <authorList>
            <person name="Adams M.D."/>
            <person name="Celniker S.E."/>
            <person name="Holt R.A."/>
            <person name="Evans C.A."/>
            <person name="Gocayne J.D."/>
            <person name="Amanatides P.G."/>
            <person name="Scherer S.E."/>
            <person name="Li P.W."/>
            <person name="Hoskins R.A."/>
            <person name="Galle R.F."/>
            <person name="George R.A."/>
            <person name="Lewis S.E."/>
            <person name="Richards S."/>
            <person name="Ashburner M."/>
            <person name="Henderson S.N."/>
            <person name="Sutton G.G."/>
            <person name="Wortman J.R."/>
            <person name="Yandell M.D."/>
            <person name="Zhang Q."/>
            <person name="Chen L.X."/>
            <person name="Brandon R.C."/>
            <person name="Rogers Y.-H.C."/>
            <person name="Blazej R.G."/>
            <person name="Champe M."/>
            <person name="Pfeiffer B.D."/>
            <person name="Wan K.H."/>
            <person name="Doyle C."/>
            <person name="Baxter E.G."/>
            <person name="Helt G."/>
            <person name="Nelson C.R."/>
            <person name="Miklos G.L.G."/>
            <person name="Abril J.F."/>
            <person name="Agbayani A."/>
            <person name="An H.-J."/>
            <person name="Andrews-Pfannkoch C."/>
            <person name="Baldwin D."/>
            <person name="Ballew R.M."/>
            <person name="Basu A."/>
            <person name="Baxendale J."/>
            <person name="Bayraktaroglu L."/>
            <person name="Beasley E.M."/>
            <person name="Beeson K.Y."/>
            <person name="Benos P.V."/>
            <person name="Berman B.P."/>
            <person name="Bhandari D."/>
            <person name="Bolshakov S."/>
            <person name="Borkova D."/>
            <person name="Botchan M.R."/>
            <person name="Bouck J."/>
            <person name="Brokstein P."/>
            <person name="Brottier P."/>
            <person name="Burtis K.C."/>
            <person name="Busam D.A."/>
            <person name="Butler H."/>
            <person name="Cadieu E."/>
            <person name="Center A."/>
            <person name="Chandra I."/>
            <person name="Cherry J.M."/>
            <person name="Cawley S."/>
            <person name="Dahlke C."/>
            <person name="Davenport L.B."/>
            <person name="Davies P."/>
            <person name="de Pablos B."/>
            <person name="Delcher A."/>
            <person name="Deng Z."/>
            <person name="Mays A.D."/>
            <person name="Dew I."/>
            <person name="Dietz S.M."/>
            <person name="Dodson K."/>
            <person name="Doup L.E."/>
            <person name="Downes M."/>
            <person name="Dugan-Rocha S."/>
            <person name="Dunkov B.C."/>
            <person name="Dunn P."/>
            <person name="Durbin K.J."/>
            <person name="Evangelista C.C."/>
            <person name="Ferraz C."/>
            <person name="Ferriera S."/>
            <person name="Fleischmann W."/>
            <person name="Fosler C."/>
            <person name="Gabrielian A.E."/>
            <person name="Garg N.S."/>
            <person name="Gelbart W.M."/>
            <person name="Glasser K."/>
            <person name="Glodek A."/>
            <person name="Gong F."/>
            <person name="Gorrell J.H."/>
            <person name="Gu Z."/>
            <person name="Guan P."/>
            <person name="Harris M."/>
            <person name="Harris N.L."/>
            <person name="Harvey D.A."/>
            <person name="Heiman T.J."/>
            <person name="Hernandez J.R."/>
            <person name="Houck J."/>
            <person name="Hostin D."/>
            <person name="Houston K.A."/>
            <person name="Howland T.J."/>
            <person name="Wei M.-H."/>
            <person name="Ibegwam C."/>
            <person name="Jalali M."/>
            <person name="Kalush F."/>
            <person name="Karpen G.H."/>
            <person name="Ke Z."/>
            <person name="Kennison J.A."/>
            <person name="Ketchum K.A."/>
            <person name="Kimmel B.E."/>
            <person name="Kodira C.D."/>
            <person name="Kraft C.L."/>
            <person name="Kravitz S."/>
            <person name="Kulp D."/>
            <person name="Lai Z."/>
            <person name="Lasko P."/>
            <person name="Lei Y."/>
            <person name="Levitsky A.A."/>
            <person name="Li J.H."/>
            <person name="Li Z."/>
            <person name="Liang Y."/>
            <person name="Lin X."/>
            <person name="Liu X."/>
            <person name="Mattei B."/>
            <person name="McIntosh T.C."/>
            <person name="McLeod M.P."/>
            <person name="McPherson D."/>
            <person name="Merkulov G."/>
            <person name="Milshina N.V."/>
            <person name="Mobarry C."/>
            <person name="Morris J."/>
            <person name="Moshrefi A."/>
            <person name="Mount S.M."/>
            <person name="Moy M."/>
            <person name="Murphy B."/>
            <person name="Murphy L."/>
            <person name="Muzny D.M."/>
            <person name="Nelson D.L."/>
            <person name="Nelson D.R."/>
            <person name="Nelson K.A."/>
            <person name="Nixon K."/>
            <person name="Nusskern D.R."/>
            <person name="Pacleb J.M."/>
            <person name="Palazzolo M."/>
            <person name="Pittman G.S."/>
            <person name="Pan S."/>
            <person name="Pollard J."/>
            <person name="Puri V."/>
            <person name="Reese M.G."/>
            <person name="Reinert K."/>
            <person name="Remington K."/>
            <person name="Saunders R.D.C."/>
            <person name="Scheeler F."/>
            <person name="Shen H."/>
            <person name="Shue B.C."/>
            <person name="Siden-Kiamos I."/>
            <person name="Simpson M."/>
            <person name="Skupski M.P."/>
            <person name="Smith T.J."/>
            <person name="Spier E."/>
            <person name="Spradling A.C."/>
            <person name="Stapleton M."/>
            <person name="Strong R."/>
            <person name="Sun E."/>
            <person name="Svirskas R."/>
            <person name="Tector C."/>
            <person name="Turner R."/>
            <person name="Venter E."/>
            <person name="Wang A.H."/>
            <person name="Wang X."/>
            <person name="Wang Z.-Y."/>
            <person name="Wassarman D.A."/>
            <person name="Weinstock G.M."/>
            <person name="Weissenbach J."/>
            <person name="Williams S.M."/>
            <person name="Woodage T."/>
            <person name="Worley K.C."/>
            <person name="Wu D."/>
            <person name="Yang S."/>
            <person name="Yao Q.A."/>
            <person name="Ye J."/>
            <person name="Yeh R.-F."/>
            <person name="Zaveri J.S."/>
            <person name="Zhan M."/>
            <person name="Zhang G."/>
            <person name="Zhao Q."/>
            <person name="Zheng L."/>
            <person name="Zheng X.H."/>
            <person name="Zhong F.N."/>
            <person name="Zhong W."/>
            <person name="Zhou X."/>
            <person name="Zhu S.C."/>
            <person name="Zhu X."/>
            <person name="Smith H.O."/>
            <person name="Gibbs R.A."/>
            <person name="Myers E.W."/>
            <person name="Rubin G.M."/>
            <person name="Venter J.C."/>
        </authorList>
    </citation>
    <scope>NUCLEOTIDE SEQUENCE [LARGE SCALE GENOMIC DNA]</scope>
    <source>
        <strain>Berkeley</strain>
    </source>
</reference>
<reference key="3">
    <citation type="journal article" date="2002" name="Genome Biol.">
        <title>Annotation of the Drosophila melanogaster euchromatic genome: a systematic review.</title>
        <authorList>
            <person name="Misra S."/>
            <person name="Crosby M.A."/>
            <person name="Mungall C.J."/>
            <person name="Matthews B.B."/>
            <person name="Campbell K.S."/>
            <person name="Hradecky P."/>
            <person name="Huang Y."/>
            <person name="Kaminker J.S."/>
            <person name="Millburn G.H."/>
            <person name="Prochnik S.E."/>
            <person name="Smith C.D."/>
            <person name="Tupy J.L."/>
            <person name="Whitfield E.J."/>
            <person name="Bayraktaroglu L."/>
            <person name="Berman B.P."/>
            <person name="Bettencourt B.R."/>
            <person name="Celniker S.E."/>
            <person name="de Grey A.D.N.J."/>
            <person name="Drysdale R.A."/>
            <person name="Harris N.L."/>
            <person name="Richter J."/>
            <person name="Russo S."/>
            <person name="Schroeder A.J."/>
            <person name="Shu S.Q."/>
            <person name="Stapleton M."/>
            <person name="Yamada C."/>
            <person name="Ashburner M."/>
            <person name="Gelbart W.M."/>
            <person name="Rubin G.M."/>
            <person name="Lewis S.E."/>
        </authorList>
    </citation>
    <scope>GENOME REANNOTATION</scope>
    <source>
        <strain>Berkeley</strain>
    </source>
</reference>
<reference key="4">
    <citation type="journal article" date="2002" name="Genome Biol.">
        <title>A Drosophila full-length cDNA resource.</title>
        <authorList>
            <person name="Stapleton M."/>
            <person name="Carlson J.W."/>
            <person name="Brokstein P."/>
            <person name="Yu C."/>
            <person name="Champe M."/>
            <person name="George R.A."/>
            <person name="Guarin H."/>
            <person name="Kronmiller B."/>
            <person name="Pacleb J.M."/>
            <person name="Park S."/>
            <person name="Wan K.H."/>
            <person name="Rubin G.M."/>
            <person name="Celniker S.E."/>
        </authorList>
    </citation>
    <scope>NUCLEOTIDE SEQUENCE [LARGE SCALE MRNA]</scope>
    <source>
        <strain>Berkeley</strain>
        <tissue>Head</tissue>
    </source>
</reference>
<accession>Q9VE04</accession>
<keyword id="KW-0217">Developmental protein</keyword>
<keyword id="KW-0496">Mitochondrion</keyword>
<keyword id="KW-1185">Reference proteome</keyword>
<keyword id="KW-0687">Ribonucleoprotein</keyword>
<keyword id="KW-0689">Ribosomal protein</keyword>
<keyword id="KW-0809">Transit peptide</keyword>
<organism>
    <name type="scientific">Drosophila melanogaster</name>
    <name type="common">Fruit fly</name>
    <dbReference type="NCBI Taxonomy" id="7227"/>
    <lineage>
        <taxon>Eukaryota</taxon>
        <taxon>Metazoa</taxon>
        <taxon>Ecdysozoa</taxon>
        <taxon>Arthropoda</taxon>
        <taxon>Hexapoda</taxon>
        <taxon>Insecta</taxon>
        <taxon>Pterygota</taxon>
        <taxon>Neoptera</taxon>
        <taxon>Endopterygota</taxon>
        <taxon>Diptera</taxon>
        <taxon>Brachycera</taxon>
        <taxon>Muscomorpha</taxon>
        <taxon>Ephydroidea</taxon>
        <taxon>Drosophilidae</taxon>
        <taxon>Drosophila</taxon>
        <taxon>Sophophora</taxon>
    </lineage>
</organism>
<comment type="function">
    <text evidence="3">Involved in mitochondrial biogenesis and G2/M phase cell cycle progression.</text>
</comment>
<comment type="subunit">
    <text evidence="1">Component of the mitochondrial ribosome large subunit (39S) which comprises a 16S rRNA and about 50 distinct proteins.</text>
</comment>
<comment type="subcellular location">
    <subcellularLocation>
        <location evidence="3">Mitochondrion</location>
    </subcellularLocation>
</comment>
<comment type="tissue specificity">
    <text evidence="3">Ubiquitously expressed (at protein level).</text>
</comment>
<comment type="developmental stage">
    <text evidence="3">Expressed both maternally and zygotically. Expressed throughout embryogenesis.</text>
</comment>
<comment type="disruption phenotype">
    <text evidence="3">Flies do not grow after hatching, moved slowly and died as first instar larvae.</text>
</comment>
<comment type="similarity">
    <text evidence="4">Belongs to the mitochondrion-specific ribosomal protein mL55 family.</text>
</comment>
<feature type="transit peptide" description="Mitochondrion" evidence="2">
    <location>
        <begin position="1"/>
        <end position="16"/>
    </location>
</feature>
<feature type="chain" id="PRO_0000273101" description="Large ribosomal subunit protein mL55">
    <location>
        <begin position="17"/>
        <end position="107"/>
    </location>
</feature>
<name>RM55_DROME</name>